<name>XERD_STAAN</name>
<proteinExistence type="evidence at protein level"/>
<dbReference type="EMBL" id="BA000018">
    <property type="protein sequence ID" value="BAB42590.1"/>
    <property type="molecule type" value="Genomic_DNA"/>
</dbReference>
<dbReference type="PIR" id="A89929">
    <property type="entry name" value="A89929"/>
</dbReference>
<dbReference type="RefSeq" id="WP_000447733.1">
    <property type="nucleotide sequence ID" value="NC_002745.2"/>
</dbReference>
<dbReference type="SMR" id="P0A0P0"/>
<dbReference type="EnsemblBacteria" id="BAB42590">
    <property type="protein sequence ID" value="BAB42590"/>
    <property type="gene ID" value="BAB42590"/>
</dbReference>
<dbReference type="KEGG" id="sau:SA1328"/>
<dbReference type="HOGENOM" id="CLU_027562_9_6_9"/>
<dbReference type="GO" id="GO:0005737">
    <property type="term" value="C:cytoplasm"/>
    <property type="evidence" value="ECO:0007669"/>
    <property type="project" value="UniProtKB-SubCell"/>
</dbReference>
<dbReference type="GO" id="GO:0003677">
    <property type="term" value="F:DNA binding"/>
    <property type="evidence" value="ECO:0007669"/>
    <property type="project" value="UniProtKB-KW"/>
</dbReference>
<dbReference type="GO" id="GO:0009037">
    <property type="term" value="F:tyrosine-based site-specific recombinase activity"/>
    <property type="evidence" value="ECO:0007669"/>
    <property type="project" value="UniProtKB-UniRule"/>
</dbReference>
<dbReference type="GO" id="GO:0051301">
    <property type="term" value="P:cell division"/>
    <property type="evidence" value="ECO:0007669"/>
    <property type="project" value="UniProtKB-KW"/>
</dbReference>
<dbReference type="GO" id="GO:0007059">
    <property type="term" value="P:chromosome segregation"/>
    <property type="evidence" value="ECO:0007669"/>
    <property type="project" value="UniProtKB-UniRule"/>
</dbReference>
<dbReference type="GO" id="GO:0006313">
    <property type="term" value="P:DNA transposition"/>
    <property type="evidence" value="ECO:0007669"/>
    <property type="project" value="UniProtKB-UniRule"/>
</dbReference>
<dbReference type="CDD" id="cd00798">
    <property type="entry name" value="INT_XerDC_C"/>
    <property type="match status" value="1"/>
</dbReference>
<dbReference type="Gene3D" id="1.10.150.130">
    <property type="match status" value="1"/>
</dbReference>
<dbReference type="Gene3D" id="1.10.443.10">
    <property type="entry name" value="Intergrase catalytic core"/>
    <property type="match status" value="1"/>
</dbReference>
<dbReference type="HAMAP" id="MF_01808">
    <property type="entry name" value="Recomb_XerC_XerD"/>
    <property type="match status" value="1"/>
</dbReference>
<dbReference type="HAMAP" id="MF_01807">
    <property type="entry name" value="Recomb_XerD"/>
    <property type="match status" value="1"/>
</dbReference>
<dbReference type="InterPro" id="IPR044068">
    <property type="entry name" value="CB"/>
</dbReference>
<dbReference type="InterPro" id="IPR011010">
    <property type="entry name" value="DNA_brk_join_enz"/>
</dbReference>
<dbReference type="InterPro" id="IPR013762">
    <property type="entry name" value="Integrase-like_cat_sf"/>
</dbReference>
<dbReference type="InterPro" id="IPR002104">
    <property type="entry name" value="Integrase_catalytic"/>
</dbReference>
<dbReference type="InterPro" id="IPR010998">
    <property type="entry name" value="Integrase_recombinase_N"/>
</dbReference>
<dbReference type="InterPro" id="IPR004107">
    <property type="entry name" value="Integrase_SAM-like_N"/>
</dbReference>
<dbReference type="InterPro" id="IPR011932">
    <property type="entry name" value="Recomb_XerD"/>
</dbReference>
<dbReference type="InterPro" id="IPR023009">
    <property type="entry name" value="Tyrosine_recombinase_XerC/XerD"/>
</dbReference>
<dbReference type="InterPro" id="IPR050090">
    <property type="entry name" value="Tyrosine_recombinase_XerCD"/>
</dbReference>
<dbReference type="NCBIfam" id="NF001399">
    <property type="entry name" value="PRK00283.1"/>
    <property type="match status" value="1"/>
</dbReference>
<dbReference type="NCBIfam" id="NF040815">
    <property type="entry name" value="recomb_XerA_Arch"/>
    <property type="match status" value="1"/>
</dbReference>
<dbReference type="NCBIfam" id="TIGR02225">
    <property type="entry name" value="recomb_XerD"/>
    <property type="match status" value="1"/>
</dbReference>
<dbReference type="PANTHER" id="PTHR30349">
    <property type="entry name" value="PHAGE INTEGRASE-RELATED"/>
    <property type="match status" value="1"/>
</dbReference>
<dbReference type="PANTHER" id="PTHR30349:SF81">
    <property type="entry name" value="TYROSINE RECOMBINASE XERC"/>
    <property type="match status" value="1"/>
</dbReference>
<dbReference type="Pfam" id="PF02899">
    <property type="entry name" value="Phage_int_SAM_1"/>
    <property type="match status" value="1"/>
</dbReference>
<dbReference type="Pfam" id="PF00589">
    <property type="entry name" value="Phage_integrase"/>
    <property type="match status" value="1"/>
</dbReference>
<dbReference type="SUPFAM" id="SSF56349">
    <property type="entry name" value="DNA breaking-rejoining enzymes"/>
    <property type="match status" value="1"/>
</dbReference>
<dbReference type="PROSITE" id="PS51900">
    <property type="entry name" value="CB"/>
    <property type="match status" value="1"/>
</dbReference>
<dbReference type="PROSITE" id="PS51898">
    <property type="entry name" value="TYR_RECOMBINASE"/>
    <property type="match status" value="1"/>
</dbReference>
<keyword id="KW-0131">Cell cycle</keyword>
<keyword id="KW-0132">Cell division</keyword>
<keyword id="KW-0159">Chromosome partition</keyword>
<keyword id="KW-0963">Cytoplasm</keyword>
<keyword id="KW-0229">DNA integration</keyword>
<keyword id="KW-0233">DNA recombination</keyword>
<keyword id="KW-0238">DNA-binding</keyword>
<organism>
    <name type="scientific">Staphylococcus aureus (strain N315)</name>
    <dbReference type="NCBI Taxonomy" id="158879"/>
    <lineage>
        <taxon>Bacteria</taxon>
        <taxon>Bacillati</taxon>
        <taxon>Bacillota</taxon>
        <taxon>Bacilli</taxon>
        <taxon>Bacillales</taxon>
        <taxon>Staphylococcaceae</taxon>
        <taxon>Staphylococcus</taxon>
    </lineage>
</organism>
<sequence>METIIEEYLRFIQIEKGLSSNTIGAYRRDLKKYQDYMTEHHISHIDFIDRQLIQECLGHLIDQGQSAKSIARFISTIRSFHQFAIREKYAAKDPTVLLDSPKYDKKLPDVLNVDEVLALLETPDLNKINGYRDRTMLELLYATGMRVSELIHLELENVNLIMGFVRVFGKGDKERIVPLGDAVIEYLTTYIETIRPQLLKKTVTEVLFLNMHGKPLSRQAIWKMIKQNGVKANIKKTLTPHTLRHSFATHLLENGADLRAVQEMLGHSDISTTQLYTHVSKSQIRKMYNQFHPRA</sequence>
<reference key="1">
    <citation type="journal article" date="2001" name="Lancet">
        <title>Whole genome sequencing of meticillin-resistant Staphylococcus aureus.</title>
        <authorList>
            <person name="Kuroda M."/>
            <person name="Ohta T."/>
            <person name="Uchiyama I."/>
            <person name="Baba T."/>
            <person name="Yuzawa H."/>
            <person name="Kobayashi I."/>
            <person name="Cui L."/>
            <person name="Oguchi A."/>
            <person name="Aoki K."/>
            <person name="Nagai Y."/>
            <person name="Lian J.-Q."/>
            <person name="Ito T."/>
            <person name="Kanamori M."/>
            <person name="Matsumaru H."/>
            <person name="Maruyama A."/>
            <person name="Murakami H."/>
            <person name="Hosoyama A."/>
            <person name="Mizutani-Ui Y."/>
            <person name="Takahashi N.K."/>
            <person name="Sawano T."/>
            <person name="Inoue R."/>
            <person name="Kaito C."/>
            <person name="Sekimizu K."/>
            <person name="Hirakawa H."/>
            <person name="Kuhara S."/>
            <person name="Goto S."/>
            <person name="Yabuzaki J."/>
            <person name="Kanehisa M."/>
            <person name="Yamashita A."/>
            <person name="Oshima K."/>
            <person name="Furuya K."/>
            <person name="Yoshino C."/>
            <person name="Shiba T."/>
            <person name="Hattori M."/>
            <person name="Ogasawara N."/>
            <person name="Hayashi H."/>
            <person name="Hiramatsu K."/>
        </authorList>
    </citation>
    <scope>NUCLEOTIDE SEQUENCE [LARGE SCALE GENOMIC DNA]</scope>
    <source>
        <strain>N315</strain>
    </source>
</reference>
<reference key="2">
    <citation type="submission" date="2007-10" db="UniProtKB">
        <title>Shotgun proteomic analysis of total and membrane protein extracts of S. aureus strain N315.</title>
        <authorList>
            <person name="Vaezzadeh A.R."/>
            <person name="Deshusses J."/>
            <person name="Lescuyer P."/>
            <person name="Hochstrasser D.F."/>
        </authorList>
    </citation>
    <scope>IDENTIFICATION BY MASS SPECTROMETRY [LARGE SCALE ANALYSIS]</scope>
    <source>
        <strain>N315</strain>
    </source>
</reference>
<evidence type="ECO:0000255" key="1">
    <source>
        <dbReference type="HAMAP-Rule" id="MF_01807"/>
    </source>
</evidence>
<evidence type="ECO:0000255" key="2">
    <source>
        <dbReference type="PROSITE-ProRule" id="PRU01246"/>
    </source>
</evidence>
<evidence type="ECO:0000255" key="3">
    <source>
        <dbReference type="PROSITE-ProRule" id="PRU01248"/>
    </source>
</evidence>
<gene>
    <name evidence="1" type="primary">xerD</name>
    <name type="ordered locus">SA1328</name>
</gene>
<protein>
    <recommendedName>
        <fullName evidence="1">Tyrosine recombinase XerD</fullName>
    </recommendedName>
</protein>
<accession>P0A0P0</accession>
<accession>O87666</accession>
<accession>Q9KJF7</accession>
<accession>Q9RGN6</accession>
<comment type="function">
    <text evidence="1">Site-specific tyrosine recombinase, which acts by catalyzing the cutting and rejoining of the recombining DNA molecules. The XerC-XerD complex is essential to convert dimers of the bacterial chromosome into monomers to permit their segregation at cell division. It also contributes to the segregational stability of plasmids.</text>
</comment>
<comment type="subunit">
    <text evidence="1">Forms a cyclic heterotetrameric complex composed of two molecules of XerC and two molecules of XerD.</text>
</comment>
<comment type="subcellular location">
    <subcellularLocation>
        <location evidence="1">Cytoplasm</location>
    </subcellularLocation>
</comment>
<comment type="similarity">
    <text evidence="1">Belongs to the 'phage' integrase family. XerD subfamily.</text>
</comment>
<feature type="chain" id="PRO_0000095418" description="Tyrosine recombinase XerD">
    <location>
        <begin position="1"/>
        <end position="295"/>
    </location>
</feature>
<feature type="domain" description="Core-binding (CB)" evidence="3">
    <location>
        <begin position="1"/>
        <end position="85"/>
    </location>
</feature>
<feature type="domain" description="Tyr recombinase" evidence="2">
    <location>
        <begin position="106"/>
        <end position="289"/>
    </location>
</feature>
<feature type="active site" evidence="1">
    <location>
        <position position="146"/>
    </location>
</feature>
<feature type="active site" evidence="1">
    <location>
        <position position="170"/>
    </location>
</feature>
<feature type="active site" evidence="1">
    <location>
        <position position="241"/>
    </location>
</feature>
<feature type="active site" evidence="1">
    <location>
        <position position="244"/>
    </location>
</feature>
<feature type="active site" evidence="1">
    <location>
        <position position="267"/>
    </location>
</feature>
<feature type="active site" description="O-(3'-phospho-DNA)-tyrosine intermediate" evidence="1">
    <location>
        <position position="276"/>
    </location>
</feature>